<evidence type="ECO:0000255" key="1"/>
<evidence type="ECO:0000255" key="2">
    <source>
        <dbReference type="PROSITE-ProRule" id="PRU00691"/>
    </source>
</evidence>
<evidence type="ECO:0000305" key="3"/>
<name>MAUD_METFK</name>
<proteinExistence type="predicted"/>
<feature type="chain" id="PRO_0000208928" description="Methylamine utilization protein MauD">
    <location>
        <begin position="1"/>
        <end position="205"/>
    </location>
</feature>
<feature type="transmembrane region" description="Helical" evidence="1">
    <location>
        <begin position="5"/>
        <end position="25"/>
    </location>
</feature>
<feature type="domain" description="Thioredoxin" evidence="2">
    <location>
        <begin position="50"/>
        <end position="184"/>
    </location>
</feature>
<gene>
    <name type="primary">mauD</name>
    <name type="ordered locus">Mfla_0550</name>
</gene>
<organism>
    <name type="scientific">Methylobacillus flagellatus (strain ATCC 51484 / DSM 6875 / VKM B-1610 / KT)</name>
    <dbReference type="NCBI Taxonomy" id="265072"/>
    <lineage>
        <taxon>Bacteria</taxon>
        <taxon>Pseudomonadati</taxon>
        <taxon>Pseudomonadota</taxon>
        <taxon>Betaproteobacteria</taxon>
        <taxon>Nitrosomonadales</taxon>
        <taxon>Methylophilaceae</taxon>
        <taxon>Methylobacillus</taxon>
    </lineage>
</organism>
<protein>
    <recommendedName>
        <fullName>Methylamine utilization protein MauD</fullName>
    </recommendedName>
</protein>
<reference key="1">
    <citation type="submission" date="2006-03" db="EMBL/GenBank/DDBJ databases">
        <title>Complete sequence of Methylobacillus flagellatus KT.</title>
        <authorList>
            <consortium name="US DOE Joint Genome Institute"/>
            <person name="Copeland A."/>
            <person name="Lucas S."/>
            <person name="Lapidus A."/>
            <person name="Barry K."/>
            <person name="Detter J.C."/>
            <person name="Glavina del Rio T."/>
            <person name="Hammon N."/>
            <person name="Israni S."/>
            <person name="Dalin E."/>
            <person name="Tice H."/>
            <person name="Pitluck S."/>
            <person name="Brettin T."/>
            <person name="Bruce D."/>
            <person name="Han C."/>
            <person name="Tapia R."/>
            <person name="Saunders E."/>
            <person name="Gilna P."/>
            <person name="Schmutz J."/>
            <person name="Larimer F."/>
            <person name="Land M."/>
            <person name="Kyrpides N."/>
            <person name="Anderson I."/>
            <person name="Richardson P."/>
        </authorList>
    </citation>
    <scope>NUCLEOTIDE SEQUENCE [LARGE SCALE GENOMIC DNA]</scope>
    <source>
        <strain>ATCC 51484 / DSM 6875 / VKM B-1610 / KT</strain>
    </source>
</reference>
<reference key="2">
    <citation type="journal article" date="1995" name="J. Bacteriol.">
        <title>Cloning, sequencing, and mutation of a gene for azurin in Methylobacillus flagellatum KT.</title>
        <authorList>
            <person name="Gak E.R."/>
            <person name="Chistoserdov A.Y."/>
            <person name="Lidstrom M.E."/>
        </authorList>
    </citation>
    <scope>NUCLEOTIDE SEQUENCE [GENOMIC DNA] OF 1-50</scope>
</reference>
<reference key="3">
    <citation type="submission" date="1998-12" db="EMBL/GenBank/DDBJ databases">
        <authorList>
            <person name="Zhang X."/>
            <person name="Chistoserdov A.Y."/>
            <person name="McIntire W.S."/>
        </authorList>
    </citation>
    <scope>NUCLEOTIDE SEQUENCE [GENOMIC DNA] OF 177-205</scope>
</reference>
<dbReference type="EMBL" id="CP000284">
    <property type="protein sequence ID" value="ABE48820.1"/>
    <property type="molecule type" value="Genomic_DNA"/>
</dbReference>
<dbReference type="EMBL" id="L37436">
    <property type="protein sequence ID" value="AAC41482.1"/>
    <property type="molecule type" value="Genomic_DNA"/>
</dbReference>
<dbReference type="EMBL" id="L37427">
    <property type="protein sequence ID" value="AAC41473.1"/>
    <property type="molecule type" value="Genomic_DNA"/>
</dbReference>
<dbReference type="EMBL" id="AF114265">
    <property type="protein sequence ID" value="AAF03759.1"/>
    <property type="molecule type" value="Genomic_DNA"/>
</dbReference>
<dbReference type="RefSeq" id="WP_011478917.1">
    <property type="nucleotide sequence ID" value="NC_007947.1"/>
</dbReference>
<dbReference type="SMR" id="Q50416"/>
<dbReference type="STRING" id="265072.Mfla_0550"/>
<dbReference type="DNASU" id="4000889"/>
<dbReference type="KEGG" id="mfa:Mfla_0550"/>
<dbReference type="eggNOG" id="COG0526">
    <property type="taxonomic scope" value="Bacteria"/>
</dbReference>
<dbReference type="HOGENOM" id="CLU_091361_0_0_4"/>
<dbReference type="OrthoDB" id="462848at2"/>
<dbReference type="UniPathway" id="UPA00895"/>
<dbReference type="Proteomes" id="UP000002440">
    <property type="component" value="Chromosome"/>
</dbReference>
<dbReference type="GO" id="GO:0016020">
    <property type="term" value="C:membrane"/>
    <property type="evidence" value="ECO:0007669"/>
    <property type="project" value="UniProtKB-SubCell"/>
</dbReference>
<dbReference type="GO" id="GO:0016209">
    <property type="term" value="F:antioxidant activity"/>
    <property type="evidence" value="ECO:0007669"/>
    <property type="project" value="InterPro"/>
</dbReference>
<dbReference type="GO" id="GO:0016491">
    <property type="term" value="F:oxidoreductase activity"/>
    <property type="evidence" value="ECO:0007669"/>
    <property type="project" value="InterPro"/>
</dbReference>
<dbReference type="GO" id="GO:0030416">
    <property type="term" value="P:methylamine metabolic process"/>
    <property type="evidence" value="ECO:0007669"/>
    <property type="project" value="InterPro"/>
</dbReference>
<dbReference type="CDD" id="cd02967">
    <property type="entry name" value="mauD"/>
    <property type="match status" value="1"/>
</dbReference>
<dbReference type="Gene3D" id="3.40.30.10">
    <property type="entry name" value="Glutaredoxin"/>
    <property type="match status" value="1"/>
</dbReference>
<dbReference type="InterPro" id="IPR000866">
    <property type="entry name" value="AhpC/TSA"/>
</dbReference>
<dbReference type="InterPro" id="IPR013478">
    <property type="entry name" value="MeN_DH_accessory"/>
</dbReference>
<dbReference type="InterPro" id="IPR036249">
    <property type="entry name" value="Thioredoxin-like_sf"/>
</dbReference>
<dbReference type="InterPro" id="IPR013766">
    <property type="entry name" value="Thioredoxin_domain"/>
</dbReference>
<dbReference type="NCBIfam" id="TIGR02661">
    <property type="entry name" value="MauD"/>
    <property type="match status" value="1"/>
</dbReference>
<dbReference type="Pfam" id="PF00578">
    <property type="entry name" value="AhpC-TSA"/>
    <property type="match status" value="1"/>
</dbReference>
<dbReference type="SUPFAM" id="SSF52833">
    <property type="entry name" value="Thioredoxin-like"/>
    <property type="match status" value="1"/>
</dbReference>
<dbReference type="PROSITE" id="PS51352">
    <property type="entry name" value="THIOREDOXIN_2"/>
    <property type="match status" value="1"/>
</dbReference>
<keyword id="KW-0472">Membrane</keyword>
<keyword id="KW-1185">Reference proteome</keyword>
<keyword id="KW-0812">Transmembrane</keyword>
<keyword id="KW-1133">Transmembrane helix</keyword>
<accession>Q50416</accession>
<accession>Q1H3W7</accession>
<accession>Q50424</accession>
<accession>Q9RAN3</accession>
<sequence>MTSGIMIASNVLLWGAFLALAALMLGVIRQIGLLHERSAPLGAMMIDHGPDIGERSPVFSMTTIDGVPVTVGRAVSPGRPSLLMFTGPSCPICQKLLPIIRSVAATEGADVILISDGTQAEHREFLRNHPLDGEHYVVSAEIGMRYQVSKVPYGVLLDKDGVIQAKGLCNTREHVESLFETTRVGHSTLQNFLKHGVEDASKHVH</sequence>
<comment type="function">
    <text>May be specifically involved in the processing, transport, and/or maturation of the MADH beta-subunit.</text>
</comment>
<comment type="pathway">
    <text>One-carbon metabolism; methylamine degradation.</text>
</comment>
<comment type="subcellular location">
    <subcellularLocation>
        <location evidence="3">Membrane</location>
        <topology evidence="3">Single-pass membrane protein</topology>
    </subcellularLocation>
</comment>